<evidence type="ECO:0000250" key="1"/>
<evidence type="ECO:0000255" key="2"/>
<evidence type="ECO:0000305" key="3"/>
<accession>Q9PKE3</accession>
<dbReference type="EMBL" id="AE002160">
    <property type="protein sequence ID" value="AAF39364.1"/>
    <property type="molecule type" value="Genomic_DNA"/>
</dbReference>
<dbReference type="PIR" id="G81692">
    <property type="entry name" value="G81692"/>
</dbReference>
<dbReference type="SMR" id="Q9PKE3"/>
<dbReference type="KEGG" id="cmu:TC_0522"/>
<dbReference type="eggNOG" id="COG0706">
    <property type="taxonomic scope" value="Bacteria"/>
</dbReference>
<dbReference type="HOGENOM" id="CLU_019734_0_0_0"/>
<dbReference type="OrthoDB" id="9780552at2"/>
<dbReference type="Proteomes" id="UP000000800">
    <property type="component" value="Chromosome"/>
</dbReference>
<dbReference type="GO" id="GO:0005886">
    <property type="term" value="C:plasma membrane"/>
    <property type="evidence" value="ECO:0007669"/>
    <property type="project" value="UniProtKB-SubCell"/>
</dbReference>
<dbReference type="GO" id="GO:0032977">
    <property type="term" value="F:membrane insertase activity"/>
    <property type="evidence" value="ECO:0007669"/>
    <property type="project" value="InterPro"/>
</dbReference>
<dbReference type="GO" id="GO:0051205">
    <property type="term" value="P:protein insertion into membrane"/>
    <property type="evidence" value="ECO:0007669"/>
    <property type="project" value="TreeGrafter"/>
</dbReference>
<dbReference type="GO" id="GO:0015031">
    <property type="term" value="P:protein transport"/>
    <property type="evidence" value="ECO:0007669"/>
    <property type="project" value="UniProtKB-KW"/>
</dbReference>
<dbReference type="CDD" id="cd20070">
    <property type="entry name" value="5TM_YidC_Alb3"/>
    <property type="match status" value="1"/>
</dbReference>
<dbReference type="Gene3D" id="2.70.98.90">
    <property type="match status" value="1"/>
</dbReference>
<dbReference type="HAMAP" id="MF_01810">
    <property type="entry name" value="YidC_type1"/>
    <property type="match status" value="1"/>
</dbReference>
<dbReference type="InterPro" id="IPR019998">
    <property type="entry name" value="Membr_insert_YidC"/>
</dbReference>
<dbReference type="InterPro" id="IPR001708">
    <property type="entry name" value="YidC/ALB3/OXA1/COX18"/>
</dbReference>
<dbReference type="InterPro" id="IPR028055">
    <property type="entry name" value="YidC/Oxa/ALB_C"/>
</dbReference>
<dbReference type="InterPro" id="IPR047196">
    <property type="entry name" value="YidC_ALB_C"/>
</dbReference>
<dbReference type="InterPro" id="IPR038221">
    <property type="entry name" value="YidC_periplasmic_sf"/>
</dbReference>
<dbReference type="NCBIfam" id="NF002168">
    <property type="entry name" value="PRK01001.1"/>
    <property type="match status" value="1"/>
</dbReference>
<dbReference type="NCBIfam" id="TIGR03592">
    <property type="entry name" value="yidC_oxa1_cterm"/>
    <property type="match status" value="1"/>
</dbReference>
<dbReference type="PANTHER" id="PTHR12428:SF65">
    <property type="entry name" value="CYTOCHROME C OXIDASE ASSEMBLY PROTEIN COX18, MITOCHONDRIAL"/>
    <property type="match status" value="1"/>
</dbReference>
<dbReference type="PANTHER" id="PTHR12428">
    <property type="entry name" value="OXA1"/>
    <property type="match status" value="1"/>
</dbReference>
<dbReference type="Pfam" id="PF02096">
    <property type="entry name" value="60KD_IMP"/>
    <property type="match status" value="1"/>
</dbReference>
<dbReference type="PRINTS" id="PR01900">
    <property type="entry name" value="YIDCPROTEIN"/>
</dbReference>
<dbReference type="PROSITE" id="PS51257">
    <property type="entry name" value="PROKAR_LIPOPROTEIN"/>
    <property type="match status" value="1"/>
</dbReference>
<proteinExistence type="inferred from homology"/>
<reference key="1">
    <citation type="journal article" date="2000" name="Nucleic Acids Res.">
        <title>Genome sequences of Chlamydia trachomatis MoPn and Chlamydia pneumoniae AR39.</title>
        <authorList>
            <person name="Read T.D."/>
            <person name="Brunham R.C."/>
            <person name="Shen C."/>
            <person name="Gill S.R."/>
            <person name="Heidelberg J.F."/>
            <person name="White O."/>
            <person name="Hickey E.K."/>
            <person name="Peterson J.D."/>
            <person name="Utterback T.R."/>
            <person name="Berry K.J."/>
            <person name="Bass S."/>
            <person name="Linher K.D."/>
            <person name="Weidman J.F."/>
            <person name="Khouri H.M."/>
            <person name="Craven B."/>
            <person name="Bowman C."/>
            <person name="Dodson R.J."/>
            <person name="Gwinn M.L."/>
            <person name="Nelson W.C."/>
            <person name="DeBoy R.T."/>
            <person name="Kolonay J.F."/>
            <person name="McClarty G."/>
            <person name="Salzberg S.L."/>
            <person name="Eisen J.A."/>
            <person name="Fraser C.M."/>
        </authorList>
    </citation>
    <scope>NUCLEOTIDE SEQUENCE [LARGE SCALE GENOMIC DNA]</scope>
    <source>
        <strain>MoPn / Nigg</strain>
    </source>
</reference>
<comment type="function">
    <text evidence="1">Required for the insertion and/or proper folding and/or complex formation of integral membrane proteins into the membrane. Involved in integration of membrane proteins that insert both dependently and independently of the Sec translocase complex, as well as at least some lipoproteins. Aids folding of multispanning membrane proteins (By similarity).</text>
</comment>
<comment type="subunit">
    <text evidence="1">Interacts with the Sec translocase complex via SecD. Specifically interacts with transmembrane segments of nascent integral membrane proteins during membrane integration (By similarity).</text>
</comment>
<comment type="subcellular location">
    <subcellularLocation>
        <location evidence="1">Cell inner membrane</location>
        <topology evidence="1">Multi-pass membrane protein</topology>
    </subcellularLocation>
</comment>
<comment type="similarity">
    <text evidence="3">Belongs to the OXA1/ALB3/YidC family. Type 1 subfamily.</text>
</comment>
<gene>
    <name type="primary">yidC</name>
    <name type="ordered locus">TC_0522</name>
</gene>
<organism>
    <name type="scientific">Chlamydia muridarum (strain MoPn / Nigg)</name>
    <dbReference type="NCBI Taxonomy" id="243161"/>
    <lineage>
        <taxon>Bacteria</taxon>
        <taxon>Pseudomonadati</taxon>
        <taxon>Chlamydiota</taxon>
        <taxon>Chlamydiia</taxon>
        <taxon>Chlamydiales</taxon>
        <taxon>Chlamydiaceae</taxon>
        <taxon>Chlamydia/Chlamydophila group</taxon>
        <taxon>Chlamydia</taxon>
    </lineage>
</organism>
<name>YIDC_CHLMU</name>
<protein>
    <recommendedName>
        <fullName>Membrane protein insertase YidC</fullName>
    </recommendedName>
    <alternativeName>
        <fullName>Foldase YidC</fullName>
    </alternativeName>
    <alternativeName>
        <fullName>Membrane integrase YidC</fullName>
    </alternativeName>
    <alternativeName>
        <fullName>Membrane protein YidC</fullName>
    </alternativeName>
</protein>
<sequence>MRMNKRTLLFVSLVSAAFLGCQIFFGYQDLKSCQDLAEKQRAISEQILASTEQLSVVPWTASAEESESVNQYAVRLGNRLLVLTKGGAHSEVHSKGTSWKLIDQTSTFGGILVSLYGEDGQEVLSKGGSVYLPNQQDALPVLVAEFRRNQEPLVFFGEYKNGKLSNKAGTIYGTSLVFLNTGNEFVPLGIYNSKEECVESLDLPMARAVVFADKENLTTSGSYYMLANEYMQVIVSQESGAIEGINLPFASDREGNKSIVNEIGFDRELAAGSPSEASFPGVQAIDSQRQNVSSVVGGYYPLLRRGTLSDTRKMVSPQYQALNIVSGRELSSPVATGFRVVSFDNKTLVLESGDGGIRKTYTLGEQPYAFDLEIQTTRGQEDLWITSGVPEVEIMSNAFVPAVKYHAVKKNKSDLINVKLPKAKDSLLVRNDASPQWILNSNGYFGVILTPKTPLPTGYASSFIPGNAVPTRLTQLSPKDQAYPASKYPGYTAMLPLPKEAGRYQFMVYAGPLSEPTLKALDRAHTNHKGESPEYVDAIAFRGFFSFITEPFAALLFIIMKFFQFLTGSWGISIILLTIVLKLVLYPLNAWSIRSMRRMQKLSPYIQDIQQKYKREPKRAQMEIMALYKVNKVNPITGCLPLIIQIPFLIAMFDLLKSSFLLRGASFIPGWIDNLTAPDVLFSWETPIWFIGKEFHLLPILLGIVMFAQQKISAIKRSGPVSDQQRQQEAMGTMMALLFTFMFYNFPSGLNIYWLSSMLLGVIQQWATNKILDEKHLQHEVIVNKKR</sequence>
<feature type="signal peptide" evidence="2">
    <location>
        <begin position="1"/>
        <end position="20"/>
    </location>
</feature>
<feature type="chain" id="PRO_0000124704" description="Membrane protein insertase YidC">
    <location>
        <begin position="21"/>
        <end position="787"/>
    </location>
</feature>
<feature type="transmembrane region" description="Helical" evidence="2">
    <location>
        <begin position="543"/>
        <end position="563"/>
    </location>
</feature>
<feature type="transmembrane region" description="Helical" evidence="2">
    <location>
        <begin position="565"/>
        <end position="585"/>
    </location>
</feature>
<feature type="transmembrane region" description="Helical" evidence="2">
    <location>
        <begin position="636"/>
        <end position="656"/>
    </location>
</feature>
<feature type="transmembrane region" description="Helical" evidence="2">
    <location>
        <begin position="688"/>
        <end position="708"/>
    </location>
</feature>
<feature type="transmembrane region" description="Helical" evidence="2">
    <location>
        <begin position="735"/>
        <end position="755"/>
    </location>
</feature>
<feature type="lipid moiety-binding region" description="N-palmitoyl cysteine" evidence="2">
    <location>
        <position position="21"/>
    </location>
</feature>
<feature type="lipid moiety-binding region" description="S-diacylglycerol cysteine" evidence="2">
    <location>
        <position position="21"/>
    </location>
</feature>
<keyword id="KW-0997">Cell inner membrane</keyword>
<keyword id="KW-1003">Cell membrane</keyword>
<keyword id="KW-0143">Chaperone</keyword>
<keyword id="KW-0449">Lipoprotein</keyword>
<keyword id="KW-0472">Membrane</keyword>
<keyword id="KW-0564">Palmitate</keyword>
<keyword id="KW-0653">Protein transport</keyword>
<keyword id="KW-0732">Signal</keyword>
<keyword id="KW-0812">Transmembrane</keyword>
<keyword id="KW-1133">Transmembrane helix</keyword>
<keyword id="KW-0813">Transport</keyword>